<proteinExistence type="inferred from homology"/>
<protein>
    <recommendedName>
        <fullName evidence="1">Flavin-dependent thymidylate synthase</fullName>
        <shortName evidence="1">FDTS</shortName>
        <ecNumber evidence="1">2.1.1.148</ecNumber>
    </recommendedName>
    <alternativeName>
        <fullName evidence="1">FAD-dependent thymidylate synthase</fullName>
    </alternativeName>
    <alternativeName>
        <fullName evidence="1">Thymidylate synthase ThyX</fullName>
        <shortName evidence="1">TS</shortName>
        <shortName evidence="1">TSase</shortName>
    </alternativeName>
</protein>
<organism>
    <name type="scientific">Corynebacterium efficiens (strain DSM 44549 / YS-314 / AJ 12310 / JCM 11189 / NBRC 100395)</name>
    <dbReference type="NCBI Taxonomy" id="196164"/>
    <lineage>
        <taxon>Bacteria</taxon>
        <taxon>Bacillati</taxon>
        <taxon>Actinomycetota</taxon>
        <taxon>Actinomycetes</taxon>
        <taxon>Mycobacteriales</taxon>
        <taxon>Corynebacteriaceae</taxon>
        <taxon>Corynebacterium</taxon>
    </lineage>
</organism>
<sequence length="250" mass="28054">MTEPVELSVELIACSSFTPPASVAWDTDAHGAEALVEFAGRACYETFDKPNPRTATNAAYLRHIMEVGHTALLEHASATMYIRGISRSATHELVRHRHFSFSQLSQRFVHEGEQEVIIPELINEDPQLRSLFLRAMDDNRFVYNELLNALEEKLEGEPNALLRKKQARQAARAVLPNATESRIVVTGNFRSWRHFLGMRASEHADVEIRAVAVACLEKLKQQAPTVFGDFQVETLADGTQMATSPYVTDF</sequence>
<accession>Q8RQM9</accession>
<keyword id="KW-0274">FAD</keyword>
<keyword id="KW-0285">Flavoprotein</keyword>
<keyword id="KW-0489">Methyltransferase</keyword>
<keyword id="KW-0521">NADP</keyword>
<keyword id="KW-0545">Nucleotide biosynthesis</keyword>
<keyword id="KW-1185">Reference proteome</keyword>
<keyword id="KW-0808">Transferase</keyword>
<dbReference type="EC" id="2.1.1.148" evidence="1"/>
<dbReference type="EMBL" id="AB083130">
    <property type="protein sequence ID" value="BAB88822.1"/>
    <property type="molecule type" value="Genomic_DNA"/>
</dbReference>
<dbReference type="EMBL" id="BA000035">
    <property type="protein sequence ID" value="BAC18675.1"/>
    <property type="molecule type" value="Genomic_DNA"/>
</dbReference>
<dbReference type="RefSeq" id="WP_006767863.1">
    <property type="nucleotide sequence ID" value="NC_004369.1"/>
</dbReference>
<dbReference type="SMR" id="Q8RQM9"/>
<dbReference type="STRING" id="196164.gene:10742293"/>
<dbReference type="KEGG" id="cef:CE1865"/>
<dbReference type="eggNOG" id="COG1351">
    <property type="taxonomic scope" value="Bacteria"/>
</dbReference>
<dbReference type="HOGENOM" id="CLU_077585_1_0_11"/>
<dbReference type="OrthoDB" id="9780625at2"/>
<dbReference type="UniPathway" id="UPA00575"/>
<dbReference type="Proteomes" id="UP000001409">
    <property type="component" value="Chromosome"/>
</dbReference>
<dbReference type="GO" id="GO:0050660">
    <property type="term" value="F:flavin adenine dinucleotide binding"/>
    <property type="evidence" value="ECO:0007669"/>
    <property type="project" value="InterPro"/>
</dbReference>
<dbReference type="GO" id="GO:0070402">
    <property type="term" value="F:NADPH binding"/>
    <property type="evidence" value="ECO:0007669"/>
    <property type="project" value="TreeGrafter"/>
</dbReference>
<dbReference type="GO" id="GO:0050797">
    <property type="term" value="F:thymidylate synthase (FAD) activity"/>
    <property type="evidence" value="ECO:0007669"/>
    <property type="project" value="UniProtKB-UniRule"/>
</dbReference>
<dbReference type="GO" id="GO:0004799">
    <property type="term" value="F:thymidylate synthase activity"/>
    <property type="evidence" value="ECO:0007669"/>
    <property type="project" value="TreeGrafter"/>
</dbReference>
<dbReference type="GO" id="GO:0006231">
    <property type="term" value="P:dTMP biosynthetic process"/>
    <property type="evidence" value="ECO:0007669"/>
    <property type="project" value="UniProtKB-UniRule"/>
</dbReference>
<dbReference type="GO" id="GO:0006235">
    <property type="term" value="P:dTTP biosynthetic process"/>
    <property type="evidence" value="ECO:0007669"/>
    <property type="project" value="UniProtKB-UniRule"/>
</dbReference>
<dbReference type="GO" id="GO:0032259">
    <property type="term" value="P:methylation"/>
    <property type="evidence" value="ECO:0007669"/>
    <property type="project" value="UniProtKB-KW"/>
</dbReference>
<dbReference type="CDD" id="cd20175">
    <property type="entry name" value="ThyX"/>
    <property type="match status" value="1"/>
</dbReference>
<dbReference type="Gene3D" id="3.30.1360.170">
    <property type="match status" value="1"/>
</dbReference>
<dbReference type="HAMAP" id="MF_01408">
    <property type="entry name" value="ThyX"/>
    <property type="match status" value="1"/>
</dbReference>
<dbReference type="InterPro" id="IPR003669">
    <property type="entry name" value="Thymidylate_synthase_ThyX"/>
</dbReference>
<dbReference type="InterPro" id="IPR036098">
    <property type="entry name" value="Thymidylate_synthase_ThyX_sf"/>
</dbReference>
<dbReference type="NCBIfam" id="TIGR02170">
    <property type="entry name" value="thyX"/>
    <property type="match status" value="1"/>
</dbReference>
<dbReference type="PANTHER" id="PTHR34934">
    <property type="entry name" value="FLAVIN-DEPENDENT THYMIDYLATE SYNTHASE"/>
    <property type="match status" value="1"/>
</dbReference>
<dbReference type="PANTHER" id="PTHR34934:SF1">
    <property type="entry name" value="FLAVIN-DEPENDENT THYMIDYLATE SYNTHASE"/>
    <property type="match status" value="1"/>
</dbReference>
<dbReference type="Pfam" id="PF02511">
    <property type="entry name" value="Thy1"/>
    <property type="match status" value="1"/>
</dbReference>
<dbReference type="SUPFAM" id="SSF69796">
    <property type="entry name" value="Thymidylate synthase-complementing protein Thy1"/>
    <property type="match status" value="1"/>
</dbReference>
<dbReference type="PROSITE" id="PS51331">
    <property type="entry name" value="THYX"/>
    <property type="match status" value="1"/>
</dbReference>
<feature type="chain" id="PRO_0000175559" description="Flavin-dependent thymidylate synthase">
    <location>
        <begin position="1"/>
        <end position="250"/>
    </location>
</feature>
<feature type="domain" description="ThyX" evidence="2">
    <location>
        <begin position="7"/>
        <end position="233"/>
    </location>
</feature>
<feature type="short sequence motif" description="ThyX motif" evidence="1">
    <location>
        <begin position="95"/>
        <end position="105"/>
    </location>
</feature>
<feature type="active site" description="Involved in ionization of N3 of dUMP, leading to its activation" evidence="1">
    <location>
        <position position="199"/>
    </location>
</feature>
<feature type="binding site" evidence="1">
    <location>
        <begin position="92"/>
        <end position="95"/>
    </location>
    <ligand>
        <name>dUMP</name>
        <dbReference type="ChEBI" id="CHEBI:246422"/>
        <note>ligand shared between dimeric partners</note>
    </ligand>
</feature>
<feature type="binding site" evidence="1">
    <location>
        <begin position="95"/>
        <end position="97"/>
    </location>
    <ligand>
        <name>FAD</name>
        <dbReference type="ChEBI" id="CHEBI:57692"/>
        <note>ligand shared between neighboring subunits</note>
    </ligand>
</feature>
<feature type="binding site" description="in other chain" evidence="1">
    <location>
        <begin position="103"/>
        <end position="107"/>
    </location>
    <ligand>
        <name>dUMP</name>
        <dbReference type="ChEBI" id="CHEBI:246422"/>
        <note>ligand shared between dimeric partners</note>
    </ligand>
</feature>
<feature type="binding site" evidence="1">
    <location>
        <position position="103"/>
    </location>
    <ligand>
        <name>FAD</name>
        <dbReference type="ChEBI" id="CHEBI:57692"/>
        <note>ligand shared between neighboring subunits</note>
    </ligand>
</feature>
<feature type="binding site" description="in other chain" evidence="1">
    <location>
        <position position="172"/>
    </location>
    <ligand>
        <name>dUMP</name>
        <dbReference type="ChEBI" id="CHEBI:246422"/>
        <note>ligand shared between dimeric partners</note>
    </ligand>
</feature>
<feature type="binding site" evidence="1">
    <location>
        <begin position="188"/>
        <end position="190"/>
    </location>
    <ligand>
        <name>FAD</name>
        <dbReference type="ChEBI" id="CHEBI:57692"/>
        <note>ligand shared between neighboring subunits</note>
    </ligand>
</feature>
<feature type="binding site" evidence="1">
    <location>
        <position position="194"/>
    </location>
    <ligand>
        <name>FAD</name>
        <dbReference type="ChEBI" id="CHEBI:57692"/>
        <note>ligand shared between neighboring subunits</note>
    </ligand>
</feature>
<feature type="binding site" evidence="1">
    <location>
        <position position="199"/>
    </location>
    <ligand>
        <name>dUMP</name>
        <dbReference type="ChEBI" id="CHEBI:246422"/>
        <note>ligand shared between dimeric partners</note>
    </ligand>
</feature>
<name>THYX_COREF</name>
<comment type="function">
    <text evidence="1">Catalyzes the reductive methylation of 2'-deoxyuridine-5'-monophosphate (dUMP) to 2'-deoxythymidine-5'-monophosphate (dTMP) while utilizing 5,10-methylenetetrahydrofolate (mTHF) as the methyl donor, and NADPH and FADH(2) as the reductant.</text>
</comment>
<comment type="catalytic activity">
    <reaction evidence="1">
        <text>dUMP + (6R)-5,10-methylene-5,6,7,8-tetrahydrofolate + NADPH + H(+) = dTMP + (6S)-5,6,7,8-tetrahydrofolate + NADP(+)</text>
        <dbReference type="Rhea" id="RHEA:29043"/>
        <dbReference type="ChEBI" id="CHEBI:15378"/>
        <dbReference type="ChEBI" id="CHEBI:15636"/>
        <dbReference type="ChEBI" id="CHEBI:57453"/>
        <dbReference type="ChEBI" id="CHEBI:57783"/>
        <dbReference type="ChEBI" id="CHEBI:58349"/>
        <dbReference type="ChEBI" id="CHEBI:63528"/>
        <dbReference type="ChEBI" id="CHEBI:246422"/>
        <dbReference type="EC" id="2.1.1.148"/>
    </reaction>
</comment>
<comment type="cofactor">
    <cofactor evidence="1">
        <name>FAD</name>
        <dbReference type="ChEBI" id="CHEBI:57692"/>
    </cofactor>
    <text evidence="1">Binds 4 FAD per tetramer. Each FAD binding site is formed by three monomers.</text>
</comment>
<comment type="pathway">
    <text evidence="1">Pyrimidine metabolism; dTTP biosynthesis.</text>
</comment>
<comment type="subunit">
    <text evidence="1">Homotetramer.</text>
</comment>
<comment type="similarity">
    <text evidence="1">Belongs to the thymidylate synthase ThyX family.</text>
</comment>
<evidence type="ECO:0000255" key="1">
    <source>
        <dbReference type="HAMAP-Rule" id="MF_01408"/>
    </source>
</evidence>
<evidence type="ECO:0000255" key="2">
    <source>
        <dbReference type="PROSITE-ProRule" id="PRU00661"/>
    </source>
</evidence>
<gene>
    <name evidence="1" type="primary">thyX</name>
    <name type="ordered locus">CE1865</name>
</gene>
<reference key="1">
    <citation type="submission" date="2002-04" db="EMBL/GenBank/DDBJ databases">
        <title>dapB, dapA of Corynebacterium efficiens.</title>
        <authorList>
            <person name="Itaya H."/>
            <person name="Kimura E."/>
            <person name="Kawahara Y."/>
            <person name="Sugimoto S."/>
        </authorList>
    </citation>
    <scope>NUCLEOTIDE SEQUENCE [GENOMIC DNA]</scope>
    <source>
        <strain>DSM 44549 / YS-314 / AJ 12310 / JCM 11189 / NBRC 100395</strain>
    </source>
</reference>
<reference key="2">
    <citation type="journal article" date="2003" name="Genome Res.">
        <title>Comparative complete genome sequence analysis of the amino acid replacements responsible for the thermostability of Corynebacterium efficiens.</title>
        <authorList>
            <person name="Nishio Y."/>
            <person name="Nakamura Y."/>
            <person name="Kawarabayasi Y."/>
            <person name="Usuda Y."/>
            <person name="Kimura E."/>
            <person name="Sugimoto S."/>
            <person name="Matsui K."/>
            <person name="Yamagishi A."/>
            <person name="Kikuchi H."/>
            <person name="Ikeo K."/>
            <person name="Gojobori T."/>
        </authorList>
    </citation>
    <scope>NUCLEOTIDE SEQUENCE [LARGE SCALE GENOMIC DNA]</scope>
    <source>
        <strain>DSM 44549 / YS-314 / AJ 12310 / JCM 11189 / NBRC 100395</strain>
    </source>
</reference>